<evidence type="ECO:0000255" key="1">
    <source>
        <dbReference type="HAMAP-Rule" id="MF_01859"/>
    </source>
</evidence>
<organism>
    <name type="scientific">Vibrio vulnificus (strain YJ016)</name>
    <dbReference type="NCBI Taxonomy" id="196600"/>
    <lineage>
        <taxon>Bacteria</taxon>
        <taxon>Pseudomonadati</taxon>
        <taxon>Pseudomonadota</taxon>
        <taxon>Gammaproteobacteria</taxon>
        <taxon>Vibrionales</taxon>
        <taxon>Vibrionaceae</taxon>
        <taxon>Vibrio</taxon>
    </lineage>
</organism>
<accession>Q7MIC5</accession>
<sequence>MKTELNLFDRQLTLFRYPNNANETLQAWDAGDEYLINYVEELALDTPQNILILNDHFGALSCWFSAQHQVTMMSDSFISQQGAKENLQRNQCREVKLLTTLDAIPTETSLVLFQLPKNNRHLTWQLTQLRKTLSPDVPVVAVNKAKEIHTSTLKLFEKYLGTTKTSLAWKKHRLVFCQADCAQMNDISPVTRWNVEEHKMTLNNLPNVYSGESLDLGARFMLEHIPQDDNLKHIIDLGCGNGVLSVKAAQLNPKAKFTLVDESYMAIESARLNLQENVTASVDAEYIANNCLDGFAGEIADLILCNPPFHQQQAITDHIAWQMFCDAKRVLKRGGKLQVIGNRHLGYDGKLKRLYGDKNVKLVASNSKFVILQATK</sequence>
<keyword id="KW-0963">Cytoplasm</keyword>
<keyword id="KW-0489">Methyltransferase</keyword>
<keyword id="KW-0698">rRNA processing</keyword>
<keyword id="KW-0949">S-adenosyl-L-methionine</keyword>
<keyword id="KW-0808">Transferase</keyword>
<reference key="1">
    <citation type="journal article" date="2003" name="Genome Res.">
        <title>Comparative genome analysis of Vibrio vulnificus, a marine pathogen.</title>
        <authorList>
            <person name="Chen C.-Y."/>
            <person name="Wu K.-M."/>
            <person name="Chang Y.-C."/>
            <person name="Chang C.-H."/>
            <person name="Tsai H.-C."/>
            <person name="Liao T.-L."/>
            <person name="Liu Y.-M."/>
            <person name="Chen H.-J."/>
            <person name="Shen A.B.-T."/>
            <person name="Li J.-C."/>
            <person name="Su T.-L."/>
            <person name="Shao C.-P."/>
            <person name="Lee C.-T."/>
            <person name="Hor L.-I."/>
            <person name="Tsai S.-F."/>
        </authorList>
    </citation>
    <scope>NUCLEOTIDE SEQUENCE [LARGE SCALE GENOMIC DNA]</scope>
    <source>
        <strain>YJ016</strain>
    </source>
</reference>
<proteinExistence type="inferred from homology"/>
<comment type="function">
    <text evidence="1">Specifically methylates the guanine in position 1835 (m2G1835) of 23S rRNA.</text>
</comment>
<comment type="catalytic activity">
    <reaction evidence="1">
        <text>guanosine(1835) in 23S rRNA + S-adenosyl-L-methionine = N(2)-methylguanosine(1835) in 23S rRNA + S-adenosyl-L-homocysteine + H(+)</text>
        <dbReference type="Rhea" id="RHEA:42744"/>
        <dbReference type="Rhea" id="RHEA-COMP:10217"/>
        <dbReference type="Rhea" id="RHEA-COMP:10218"/>
        <dbReference type="ChEBI" id="CHEBI:15378"/>
        <dbReference type="ChEBI" id="CHEBI:57856"/>
        <dbReference type="ChEBI" id="CHEBI:59789"/>
        <dbReference type="ChEBI" id="CHEBI:74269"/>
        <dbReference type="ChEBI" id="CHEBI:74481"/>
        <dbReference type="EC" id="2.1.1.174"/>
    </reaction>
</comment>
<comment type="subcellular location">
    <subcellularLocation>
        <location evidence="1">Cytoplasm</location>
    </subcellularLocation>
</comment>
<comment type="similarity">
    <text evidence="1">Belongs to the methyltransferase superfamily. RlmG family.</text>
</comment>
<gene>
    <name evidence="1" type="primary">rlmG</name>
    <name type="ordered locus">VV2592</name>
</gene>
<feature type="chain" id="PRO_0000366537" description="Ribosomal RNA large subunit methyltransferase G">
    <location>
        <begin position="1"/>
        <end position="376"/>
    </location>
</feature>
<protein>
    <recommendedName>
        <fullName evidence="1">Ribosomal RNA large subunit methyltransferase G</fullName>
        <ecNumber evidence="1">2.1.1.174</ecNumber>
    </recommendedName>
    <alternativeName>
        <fullName evidence="1">23S rRNA m2G1835 methyltransferase</fullName>
    </alternativeName>
    <alternativeName>
        <fullName evidence="1">rRNA (guanine-N(2)-)-methyltransferase RlmG</fullName>
    </alternativeName>
</protein>
<dbReference type="EC" id="2.1.1.174" evidence="1"/>
<dbReference type="EMBL" id="BA000037">
    <property type="protein sequence ID" value="BAC95356.1"/>
    <property type="molecule type" value="Genomic_DNA"/>
</dbReference>
<dbReference type="RefSeq" id="WP_011079725.1">
    <property type="nucleotide sequence ID" value="NC_005139.1"/>
</dbReference>
<dbReference type="SMR" id="Q7MIC5"/>
<dbReference type="STRING" id="672.VV93_v1c23100"/>
<dbReference type="KEGG" id="vvy:VV2592"/>
<dbReference type="PATRIC" id="fig|196600.6.peg.2596"/>
<dbReference type="eggNOG" id="COG2813">
    <property type="taxonomic scope" value="Bacteria"/>
</dbReference>
<dbReference type="HOGENOM" id="CLU_040288_4_0_6"/>
<dbReference type="Proteomes" id="UP000002675">
    <property type="component" value="Chromosome I"/>
</dbReference>
<dbReference type="GO" id="GO:0005737">
    <property type="term" value="C:cytoplasm"/>
    <property type="evidence" value="ECO:0007669"/>
    <property type="project" value="UniProtKB-SubCell"/>
</dbReference>
<dbReference type="GO" id="GO:0052916">
    <property type="term" value="F:23S rRNA (guanine(1835)-N(2))-methyltransferase activity"/>
    <property type="evidence" value="ECO:0007669"/>
    <property type="project" value="UniProtKB-EC"/>
</dbReference>
<dbReference type="GO" id="GO:0003676">
    <property type="term" value="F:nucleic acid binding"/>
    <property type="evidence" value="ECO:0007669"/>
    <property type="project" value="InterPro"/>
</dbReference>
<dbReference type="CDD" id="cd02440">
    <property type="entry name" value="AdoMet_MTases"/>
    <property type="match status" value="1"/>
</dbReference>
<dbReference type="Gene3D" id="3.40.50.150">
    <property type="entry name" value="Vaccinia Virus protein VP39"/>
    <property type="match status" value="2"/>
</dbReference>
<dbReference type="HAMAP" id="MF_01859">
    <property type="entry name" value="23SrRNA_methyltr_G"/>
    <property type="match status" value="1"/>
</dbReference>
<dbReference type="InterPro" id="IPR002052">
    <property type="entry name" value="DNA_methylase_N6_adenine_CS"/>
</dbReference>
<dbReference type="InterPro" id="IPR017237">
    <property type="entry name" value="rRNA_m2G-MeTrfase_RlmG"/>
</dbReference>
<dbReference type="InterPro" id="IPR046977">
    <property type="entry name" value="RsmC/RlmG"/>
</dbReference>
<dbReference type="InterPro" id="IPR029063">
    <property type="entry name" value="SAM-dependent_MTases_sf"/>
</dbReference>
<dbReference type="InterPro" id="IPR007848">
    <property type="entry name" value="Small_mtfrase_dom"/>
</dbReference>
<dbReference type="PANTHER" id="PTHR47816:SF5">
    <property type="entry name" value="RIBOSOMAL RNA LARGE SUBUNIT METHYLTRANSFERASE G"/>
    <property type="match status" value="1"/>
</dbReference>
<dbReference type="PANTHER" id="PTHR47816">
    <property type="entry name" value="RIBOSOMAL RNA SMALL SUBUNIT METHYLTRANSFERASE C"/>
    <property type="match status" value="1"/>
</dbReference>
<dbReference type="Pfam" id="PF05175">
    <property type="entry name" value="MTS"/>
    <property type="match status" value="1"/>
</dbReference>
<dbReference type="PIRSF" id="PIRSF037565">
    <property type="entry name" value="RRNA_m2G_Mtase_RsmD_prd"/>
    <property type="match status" value="1"/>
</dbReference>
<dbReference type="SUPFAM" id="SSF53335">
    <property type="entry name" value="S-adenosyl-L-methionine-dependent methyltransferases"/>
    <property type="match status" value="1"/>
</dbReference>
<name>RLMG_VIBVY</name>